<protein>
    <recommendedName>
        <fullName evidence="2">Beta-1,2-glucosyltransferase</fullName>
        <ecNumber evidence="1">2.4.1.391</ecNumber>
    </recommendedName>
    <alternativeName>
        <fullName evidence="2">Beta-1,2-glucooligosaccharide:D-glucoside beta-D-glucosyltransferase</fullName>
    </alternativeName>
    <alternativeName>
        <fullName evidence="2">IaSGT</fullName>
    </alternativeName>
</protein>
<sequence length="716" mass="83664">MKPHNSEKYFVKNGQPHFLISGEVHYFRINPKLWRNHLQLLKQTGADTVSTYIPWDWHEIEEDDFDFEGKTHPARNLIRFIKLCKEENLDLIVKPGPYILAEYENQGLPSWLLKKLSKNAFALDENGNVISPDLVSYLSDEFLEYTFKWYDKVMPIISKHQKEHYGPITMMQLCNEIGVFQWLSGKSDYNPKVINLYKEFIIQRYKTIEKLNSVYSTNYNSFDDLKAPSGKIKLRSDYCAYFDFHLFFREYYNKYISILKNKIRSFGINIKLTHNIPGWIYGNASELPMLISTYSEIMKNHPDIIFGLDHIPEFVSFRNAHSDLACNKILEAMQPEAPVWAAEFQAGTREHHVKAYAKDLETFYIASLAHGIKGFNYYMFSQGINPEGKGFYGKTFYFQTALDAASNKLALYDSIKKVNRFIRKEQKDLLRTNVNSEICVGFYKPYFFTELISSQLLKEKKLNVEELGLYIDPRFLREEILFNGLLRGLQTLNYNYDVVDLENCDLKSLTAYKQLWITSAEFMDAETQNLLSEFVLNGGNLILYPAVPTLDNYLNRCEILKNNFGIEFITKDSSHKVSAFGIEDVFTAFSKKQIYNDTNSKPIAFTQENEICGIRKKIGKGELTILGFAFGYTSDEHLELIDKLVKLNKIKRELFVSDKDIQFVVRENNKSRYIFFLNYHNERKTFNYRKSSELKKKKSEEISIAPFSYKVIKENK</sequence>
<name>B12GT_IGNAJ</name>
<accession>I0AIT9</accession>
<organism>
    <name type="scientific">Ignavibacterium album (strain DSM 19864 / JCM 16511 / NBRC 101810 / Mat9-16)</name>
    <dbReference type="NCBI Taxonomy" id="945713"/>
    <lineage>
        <taxon>Bacteria</taxon>
        <taxon>Pseudomonadati</taxon>
        <taxon>Ignavibacteriota</taxon>
        <taxon>Ignavibacteria</taxon>
        <taxon>Ignavibacteriales</taxon>
        <taxon>Ignavibacteriaceae</taxon>
        <taxon>Ignavibacterium</taxon>
    </lineage>
</organism>
<evidence type="ECO:0000269" key="1">
    <source>
    </source>
</evidence>
<evidence type="ECO:0000303" key="2">
    <source>
    </source>
</evidence>
<evidence type="ECO:0000305" key="3"/>
<evidence type="ECO:0000305" key="4">
    <source>
    </source>
</evidence>
<evidence type="ECO:0000312" key="5">
    <source>
        <dbReference type="EMBL" id="AFH48896.1"/>
    </source>
</evidence>
<evidence type="ECO:0007744" key="6">
    <source>
        <dbReference type="PDB" id="7VKW"/>
    </source>
</evidence>
<evidence type="ECO:0007744" key="7">
    <source>
        <dbReference type="PDB" id="7VKX"/>
    </source>
</evidence>
<evidence type="ECO:0007744" key="8">
    <source>
        <dbReference type="PDB" id="7VKY"/>
    </source>
</evidence>
<evidence type="ECO:0007744" key="9">
    <source>
        <dbReference type="PDB" id="7VKZ"/>
    </source>
</evidence>
<evidence type="ECO:0007744" key="10">
    <source>
        <dbReference type="PDB" id="7VL0"/>
    </source>
</evidence>
<evidence type="ECO:0007744" key="11">
    <source>
        <dbReference type="PDB" id="7VL1"/>
    </source>
</evidence>
<evidence type="ECO:0007744" key="12">
    <source>
        <dbReference type="PDB" id="7VL2"/>
    </source>
</evidence>
<evidence type="ECO:0007744" key="13">
    <source>
        <dbReference type="PDB" id="7VL3"/>
    </source>
</evidence>
<evidence type="ECO:0007744" key="14">
    <source>
        <dbReference type="PDB" id="7VL4"/>
    </source>
</evidence>
<evidence type="ECO:0007744" key="15">
    <source>
        <dbReference type="PDB" id="7VL5"/>
    </source>
</evidence>
<evidence type="ECO:0007744" key="16">
    <source>
        <dbReference type="PDB" id="7VL6"/>
    </source>
</evidence>
<dbReference type="EC" id="2.4.1.391" evidence="1"/>
<dbReference type="EMBL" id="CP003418">
    <property type="protein sequence ID" value="AFH48896.1"/>
    <property type="molecule type" value="Genomic_DNA"/>
</dbReference>
<dbReference type="RefSeq" id="WP_014560051.1">
    <property type="nucleotide sequence ID" value="NC_017464.1"/>
</dbReference>
<dbReference type="PDB" id="7VKW">
    <property type="method" value="X-ray"/>
    <property type="resolution" value="1.75 A"/>
    <property type="chains" value="A/B=1-716"/>
</dbReference>
<dbReference type="PDB" id="7VKX">
    <property type="method" value="X-ray"/>
    <property type="resolution" value="1.56 A"/>
    <property type="chains" value="A/B=6-716"/>
</dbReference>
<dbReference type="PDB" id="7VKY">
    <property type="method" value="X-ray"/>
    <property type="resolution" value="2.00 A"/>
    <property type="chains" value="A/B=6-716"/>
</dbReference>
<dbReference type="PDB" id="7VKZ">
    <property type="method" value="X-ray"/>
    <property type="resolution" value="2.00 A"/>
    <property type="chains" value="A/B=1-716"/>
</dbReference>
<dbReference type="PDB" id="7VL0">
    <property type="method" value="X-ray"/>
    <property type="resolution" value="1.79 A"/>
    <property type="chains" value="A/B=6-716"/>
</dbReference>
<dbReference type="PDB" id="7VL1">
    <property type="method" value="X-ray"/>
    <property type="resolution" value="1.60 A"/>
    <property type="chains" value="A/B=6-716"/>
</dbReference>
<dbReference type="PDB" id="7VL2">
    <property type="method" value="X-ray"/>
    <property type="resolution" value="1.80 A"/>
    <property type="chains" value="A/B=6-716"/>
</dbReference>
<dbReference type="PDB" id="7VL3">
    <property type="method" value="X-ray"/>
    <property type="resolution" value="1.82 A"/>
    <property type="chains" value="A/B=6-716"/>
</dbReference>
<dbReference type="PDB" id="7VL4">
    <property type="method" value="X-ray"/>
    <property type="resolution" value="1.83 A"/>
    <property type="chains" value="A/B=6-716"/>
</dbReference>
<dbReference type="PDB" id="7VL5">
    <property type="method" value="X-ray"/>
    <property type="resolution" value="1.93 A"/>
    <property type="chains" value="A/B=6-716"/>
</dbReference>
<dbReference type="PDB" id="7VL6">
    <property type="method" value="X-ray"/>
    <property type="resolution" value="1.75 A"/>
    <property type="chains" value="A/B=6-716"/>
</dbReference>
<dbReference type="PDB" id="7VL7">
    <property type="method" value="X-ray"/>
    <property type="resolution" value="1.89 A"/>
    <property type="chains" value="A/B=6-716"/>
</dbReference>
<dbReference type="PDB" id="7X87">
    <property type="method" value="X-ray"/>
    <property type="resolution" value="1.79 A"/>
    <property type="chains" value="A/B=1-716"/>
</dbReference>
<dbReference type="PDBsum" id="7VKW"/>
<dbReference type="PDBsum" id="7VKX"/>
<dbReference type="PDBsum" id="7VKY"/>
<dbReference type="PDBsum" id="7VKZ"/>
<dbReference type="PDBsum" id="7VL0"/>
<dbReference type="PDBsum" id="7VL1"/>
<dbReference type="PDBsum" id="7VL2"/>
<dbReference type="PDBsum" id="7VL3"/>
<dbReference type="PDBsum" id="7VL4"/>
<dbReference type="PDBsum" id="7VL5"/>
<dbReference type="PDBsum" id="7VL6"/>
<dbReference type="PDBsum" id="7VL7"/>
<dbReference type="PDBsum" id="7X87"/>
<dbReference type="SMR" id="I0AIT9"/>
<dbReference type="STRING" id="945713.IALB_1185"/>
<dbReference type="KEGG" id="ial:IALB_1185"/>
<dbReference type="eggNOG" id="COG1874">
    <property type="taxonomic scope" value="Bacteria"/>
</dbReference>
<dbReference type="HOGENOM" id="CLU_395770_0_0_10"/>
<dbReference type="OrthoDB" id="703126at2"/>
<dbReference type="BioCyc" id="MetaCyc:MONOMER-124336"/>
<dbReference type="Proteomes" id="UP000007394">
    <property type="component" value="Chromosome"/>
</dbReference>
<dbReference type="GO" id="GO:0005737">
    <property type="term" value="C:cytoplasm"/>
    <property type="evidence" value="ECO:0007669"/>
    <property type="project" value="UniProtKB-SubCell"/>
</dbReference>
<dbReference type="GO" id="GO:0004553">
    <property type="term" value="F:hydrolase activity, hydrolyzing O-glycosyl compounds"/>
    <property type="evidence" value="ECO:0007669"/>
    <property type="project" value="InterPro"/>
</dbReference>
<dbReference type="GO" id="GO:0046872">
    <property type="term" value="F:metal ion binding"/>
    <property type="evidence" value="ECO:0007669"/>
    <property type="project" value="UniProtKB-KW"/>
</dbReference>
<dbReference type="GO" id="GO:0005975">
    <property type="term" value="P:carbohydrate metabolic process"/>
    <property type="evidence" value="ECO:0007669"/>
    <property type="project" value="InterPro"/>
</dbReference>
<dbReference type="Gene3D" id="3.40.50.880">
    <property type="match status" value="1"/>
</dbReference>
<dbReference type="Gene3D" id="3.20.20.80">
    <property type="entry name" value="Glycosidases"/>
    <property type="match status" value="1"/>
</dbReference>
<dbReference type="InterPro" id="IPR029062">
    <property type="entry name" value="Class_I_gatase-like"/>
</dbReference>
<dbReference type="InterPro" id="IPR054746">
    <property type="entry name" value="GLMA-like_second"/>
</dbReference>
<dbReference type="InterPro" id="IPR031330">
    <property type="entry name" value="Gly_Hdrlase_35_cat"/>
</dbReference>
<dbReference type="InterPro" id="IPR001944">
    <property type="entry name" value="Glycoside_Hdrlase_35"/>
</dbReference>
<dbReference type="InterPro" id="IPR017853">
    <property type="entry name" value="Glycoside_hydrolase_SF"/>
</dbReference>
<dbReference type="PANTHER" id="PTHR23421">
    <property type="entry name" value="BETA-GALACTOSIDASE RELATED"/>
    <property type="match status" value="1"/>
</dbReference>
<dbReference type="Pfam" id="PF22369">
    <property type="entry name" value="GLMA_2nd"/>
    <property type="match status" value="1"/>
</dbReference>
<dbReference type="Pfam" id="PF01301">
    <property type="entry name" value="Glyco_hydro_35"/>
    <property type="match status" value="1"/>
</dbReference>
<dbReference type="PRINTS" id="PR00742">
    <property type="entry name" value="GLHYDRLASE35"/>
</dbReference>
<dbReference type="SUPFAM" id="SSF51445">
    <property type="entry name" value="(Trans)glycosidases"/>
    <property type="match status" value="1"/>
</dbReference>
<feature type="chain" id="PRO_0000461897" description="Beta-1,2-glucosyltransferase">
    <location>
        <begin position="1"/>
        <end position="716"/>
    </location>
</feature>
<feature type="active site" description="Proton donor/acceptor" evidence="4">
    <location>
        <position position="176"/>
    </location>
</feature>
<feature type="active site" description="Nucleophile" evidence="4">
    <location>
        <position position="343"/>
    </location>
</feature>
<feature type="binding site" evidence="1 8">
    <location>
        <position position="52"/>
    </location>
    <ligand>
        <name>sophorose</name>
        <dbReference type="ChEBI" id="CHEBI:1230"/>
    </ligand>
</feature>
<feature type="binding site" evidence="1 8">
    <location>
        <position position="99"/>
    </location>
    <ligand>
        <name>sophorose</name>
        <dbReference type="ChEBI" id="CHEBI:1230"/>
    </ligand>
</feature>
<feature type="binding site" evidence="1 8">
    <location>
        <position position="101"/>
    </location>
    <ligand>
        <name>sophorose</name>
        <dbReference type="ChEBI" id="CHEBI:1230"/>
    </ligand>
</feature>
<feature type="binding site" evidence="1 8">
    <location>
        <position position="102"/>
    </location>
    <ligand>
        <name>sophorose</name>
        <dbReference type="ChEBI" id="CHEBI:1230"/>
    </ligand>
</feature>
<feature type="binding site" evidence="1 8">
    <location>
        <position position="175"/>
    </location>
    <ligand>
        <name>sophorose</name>
        <dbReference type="ChEBI" id="CHEBI:1230"/>
    </ligand>
</feature>
<feature type="binding site" evidence="1 7">
    <location>
        <position position="176"/>
    </location>
    <ligand>
        <name>beta-D-glucose</name>
        <dbReference type="ChEBI" id="CHEBI:15903"/>
        <label>1</label>
    </ligand>
</feature>
<feature type="binding site" evidence="1 8">
    <location>
        <position position="176"/>
    </location>
    <ligand>
        <name>sophorose</name>
        <dbReference type="ChEBI" id="CHEBI:1230"/>
    </ligand>
</feature>
<feature type="binding site" evidence="1 7">
    <location>
        <position position="278"/>
    </location>
    <ligand>
        <name>beta-D-glucose</name>
        <dbReference type="ChEBI" id="CHEBI:15903"/>
        <label>1</label>
    </ligand>
</feature>
<feature type="binding site" evidence="1 8">
    <location>
        <position position="278"/>
    </location>
    <ligand>
        <name>sophorose</name>
        <dbReference type="ChEBI" id="CHEBI:1230"/>
    </ligand>
</feature>
<feature type="binding site" evidence="1 7">
    <location>
        <position position="279"/>
    </location>
    <ligand>
        <name>beta-D-glucose</name>
        <dbReference type="ChEBI" id="CHEBI:15903"/>
        <label>1</label>
    </ligand>
</feature>
<feature type="binding site" evidence="1 8">
    <location>
        <position position="279"/>
    </location>
    <ligand>
        <name>sophorose</name>
        <dbReference type="ChEBI" id="CHEBI:1230"/>
    </ligand>
</feature>
<feature type="binding site" evidence="1 8">
    <location>
        <position position="343"/>
    </location>
    <ligand>
        <name>sophorose</name>
        <dbReference type="ChEBI" id="CHEBI:1230"/>
    </ligand>
</feature>
<feature type="binding site" evidence="1 7">
    <location>
        <position position="349"/>
    </location>
    <ligand>
        <name>beta-D-glucose</name>
        <dbReference type="ChEBI" id="CHEBI:15903"/>
        <label>1</label>
    </ligand>
</feature>
<feature type="binding site" evidence="1 8">
    <location>
        <position position="349"/>
    </location>
    <ligand>
        <name>sophorose</name>
        <dbReference type="ChEBI" id="CHEBI:1230"/>
    </ligand>
</feature>
<feature type="binding site" evidence="1 7">
    <location>
        <position position="358"/>
    </location>
    <ligand>
        <name>beta-D-glucose</name>
        <dbReference type="ChEBI" id="CHEBI:15903"/>
        <label>2</label>
    </ligand>
</feature>
<feature type="binding site" evidence="1 7">
    <location>
        <position position="361"/>
    </location>
    <ligand>
        <name>beta-D-glucose</name>
        <dbReference type="ChEBI" id="CHEBI:15903"/>
        <label>2</label>
    </ligand>
</feature>
<feature type="binding site" evidence="1 8">
    <location>
        <position position="378"/>
    </location>
    <ligand>
        <name>sophorose</name>
        <dbReference type="ChEBI" id="CHEBI:1230"/>
    </ligand>
</feature>
<feature type="binding site" evidence="1 7">
    <location>
        <position position="708"/>
    </location>
    <ligand>
        <name>beta-D-glucose</name>
        <dbReference type="ChEBI" id="CHEBI:15903"/>
        <label>2</label>
    </ligand>
</feature>
<feature type="binding site" evidence="1 7">
    <location>
        <position position="709"/>
    </location>
    <ligand>
        <name>beta-D-glucose</name>
        <dbReference type="ChEBI" id="CHEBI:15903"/>
        <label>2</label>
    </ligand>
</feature>
<feature type="mutagenesis site" description="Retains less than 0.4% of activity with sophorose as a donor and pNP-alpha-glucose as an acceptor." evidence="1">
    <original>E</original>
    <variation>Q</variation>
    <location>
        <position position="176"/>
    </location>
</feature>
<feature type="mutagenesis site" description="Shows glycosynthase activity only in the presence of glucose as an acceptor among the examined monosaccharides and disaccharides." evidence="1">
    <original>E</original>
    <variation>G</variation>
    <location>
        <position position="343"/>
    </location>
</feature>
<feature type="mutagenesis site" description="Retains less than 0.1% of activity with sophorose as a donor and pNP-alpha-glucose as an acceptor." evidence="1">
    <original>E</original>
    <variation>Q</variation>
    <location>
        <position position="343"/>
    </location>
</feature>
<keyword id="KW-0002">3D-structure</keyword>
<keyword id="KW-0963">Cytoplasm</keyword>
<keyword id="KW-0328">Glycosyltransferase</keyword>
<keyword id="KW-1185">Reference proteome</keyword>
<keyword id="KW-0808">Transferase</keyword>
<gene>
    <name evidence="5" type="ordered locus">IALB_1185</name>
</gene>
<proteinExistence type="evidence at protein level"/>
<comment type="function">
    <text evidence="1">Glycosyltransferase acting on beta-1,2-glucooligosaccharides (PubMed:35065074). Catalyzes the transfer of a glucosyl residue from the non-reducing end of a 1,2-beta-D-glucan to a glucose residue of an acceptor molecule, forming a beta-1,2-glucosidic bond (PubMed:35065074). The beta-1,2-linked glucose dimer sophorose is the preferred donor in vitro (PubMed:35065074). Has a very broad specificity for the acceptor and can act on various aryl- and alkyl-glucosides (PubMed:35065074). Does not show any hydrolytic activity (PubMed:35065074).</text>
</comment>
<comment type="catalytic activity">
    <reaction evidence="1">
        <text>a D-glucoside + [(1-&gt;2)-beta-D-glucosyl](n) = a beta-D-glucosyl-(1-&gt;2)-D-glucoside + [(1-&gt;2)-beta-D-glucosyl](n-1)</text>
        <dbReference type="Rhea" id="RHEA:78691"/>
        <dbReference type="Rhea" id="RHEA-COMP:11881"/>
        <dbReference type="Rhea" id="RHEA-COMP:11882"/>
        <dbReference type="ChEBI" id="CHEBI:27517"/>
        <dbReference type="ChEBI" id="CHEBI:35436"/>
        <dbReference type="ChEBI" id="CHEBI:229541"/>
        <dbReference type="EC" id="2.4.1.391"/>
    </reaction>
</comment>
<comment type="biophysicochemical properties">
    <kinetics>
        <KM evidence="1">9.6 mM for sophorose (with pNP-alpha-glucose as an acceptor)</KM>
        <KM evidence="1">22 mM for beta-(1-&gt;2)-glucotriose (with pNP-alpha-glucose as an acceptor)</KM>
        <KM evidence="1">0.2 mM for methyl-alpha-glucose</KM>
        <KM evidence="1">0.044 mM for ethyl-alpha-glucose</KM>
        <KM evidence="1">0.22 mM for phenyl-alpha-glucose</KM>
        <KM evidence="1">0.38 mM for alpha-arbutin</KM>
        <KM evidence="1">0.13 mM for pNP-alpha-glucose</KM>
        <KM evidence="1">0.096 mM for benzyl-alpha-glucose</KM>
        <KM evidence="1">0.15 mM for 2-naphthyl-alpha-glucose</KM>
        <KM evidence="1">0.13 mM for methyl-beta-glucose</KM>
        <KM evidence="1">0.026 mM for beta-arbutin</KM>
        <KM evidence="1">0.04 mM for pNP-beta-glucose</KM>
        <KM evidence="1">0.042 mM for gastrodin</KM>
        <KM evidence="1">0.021 mM for salicin</KM>
        <KM evidence="1">0.045 mM for esculin</KM>
        <KM evidence="1">0.15 mM for amygdalin</KM>
        <text evidence="1">kcat is 70 sec(-1) with sophorose as substrate. kcat is 12 sec(-1) with beta-(1-&gt;2)-glucotriose as substrate. kcat is 1.0 sec(-1) with methyl-alpha-glucose as substrate. kcat is 0.55 sec(-1) with ethyl-alpha-glucose as substrate. kcat is 1.8 sec(-1) with phenyl-alpha-glucose as substrate. kcat is 8.7 sec(-1) with alpha-arbutin as substrate. kcat is 5.0 sec(-1) with pNP-alpha-glucose as substrate. kcat is 0.86 sec(-1) with benzyl-alpha-glucose as substrate. kcat is 3.9 sec(-1) with 2-naphthyl-alpha-glucose as substrate. kcat is 1.9 sec(-1) with methyl-beta-glucose as substrate. kcat is 1.4 sec(-1) with beta-arbutin as substrate. kcat is 0.46 sec(-1) with pNP-beta-glucose as substrate. kcat is 0.49 sec(-1) with gastrodin as substrate. kcat is 0.88 sec(-1) with salicin as substrate. kcat is 1.3 sec(-1) with esculin as substrate. kcat is 0.35 sec(-1) with amygdalin as substrate.</text>
    </kinetics>
    <phDependence>
        <text evidence="1">Shows high activity at pH 5.0 to 8.0.</text>
    </phDependence>
    <temperatureDependence>
        <text evidence="1">Optimum temperature is 55 degrees Celsius (PubMed:35065074). Stable up to 60 degrees Celsius after incubation for 1 hour (PubMed:35065074).</text>
    </temperatureDependence>
</comment>
<comment type="subunit">
    <text evidence="1">Homidimer.</text>
</comment>
<comment type="subcellular location">
    <subcellularLocation>
        <location evidence="4">Cytoplasm</location>
    </subcellularLocation>
</comment>
<comment type="similarity">
    <text evidence="3">Belongs to the glycosyl hydrolase 35 family.</text>
</comment>
<reference key="1">
    <citation type="journal article" date="2012" name="Front. Microbiol.">
        <title>Complete genome of Ignavibacterium album, a metabolically versatile, flagellated, facultative anaerobe from the phylum Chlorobi.</title>
        <authorList>
            <person name="Liu Z."/>
            <person name="Frigaard N.-U."/>
            <person name="Vogl K."/>
            <person name="Iino T."/>
            <person name="Ohkuma M."/>
            <person name="Overmann J."/>
            <person name="Bryant D.A."/>
        </authorList>
    </citation>
    <scope>NUCLEOTIDE SEQUENCE [LARGE SCALE GENOMIC DNA]</scope>
    <source>
        <strain>DSM 19864 / JCM 16511 / NBRC 101810 / Mat9-16</strain>
    </source>
</reference>
<reference evidence="6 7 8 9 10 11 12 13 14 15 16" key="2">
    <citation type="journal article" date="2022" name="J. Biol. Chem.">
        <title>Characterization and structural analyses of a novel glycosyltransferase acting on the beta-1,2-glucosidic linkages.</title>
        <authorList>
            <person name="Kobayashi K."/>
            <person name="Shimizu H."/>
            <person name="Tanaka N."/>
            <person name="Kuramochi K."/>
            <person name="Nakai H."/>
            <person name="Nakajima M."/>
            <person name="Taguchi H."/>
        </authorList>
    </citation>
    <scope>X-RAY CRYSTALLOGRAPHY (1.56 ANGSTROMS) IN COMPLEXES WITH BETA-D-GLUCOSE; SOPHOROSE AND ALTERNATIVE SUBSTRATES</scope>
    <scope>FUNCTION</scope>
    <scope>CATALYTIC ACTIVITY</scope>
    <scope>BIOPHYSICOCHEMICAL PROPERTIES</scope>
    <scope>SUBUNIT</scope>
    <scope>ACTIVE SITE</scope>
    <scope>MUTAGENESIS OF GLU-176 AND GLU-343</scope>
    <source>
        <strain>DSM 19864 / JCM 16511 / NBRC 101810 / Mat9-16</strain>
    </source>
</reference>